<evidence type="ECO:0000255" key="1"/>
<evidence type="ECO:0000305" key="2"/>
<sequence length="691" mass="74358">MLCVLAGAAYGVFRTEAALSSQWRAEAVSGVPLTVEVTDMPRSDGRRVQFAAKAVDSGGRTFDLLLSDYKRREWAVGSRWRITARVHPVVGELNLRGLNREAWALSNGVGGVGTVGADRVLLHGGSGWGIAVWRSRISRNWRQADADGGLSDGIGLMRALSVGEQSALRPGLWQAFRPLGLTHLVSISGLHVTMVAVLFAWLAKRLLACSPRLPARPRAWVLAAGCAGALFYALLAGFSVPTQRSVLMLAAFAWAWRRGRLSAWATWWQALAAVLLFDPLAVLGVGTWLSFGLVAALIWACAGRLYEGKRQTAVRGQWAASVLSLVLLGYLFASLPLVSPLVNAVSIPWFSWVLTPLALLGSVVPFAPLQQAGAFLAEYTLRFLVWLADVSPEFAVAAAPLPLLVLAVCAALLLLLPRGLGLRPWAVLLLAGFVSYRPEAVPENEAAVTVWDAGQGLSVLVRTANRHLLFDTGTVAAAQTGIVPSLNAAGVRRLDKLVLSHHDSDHDGGFQAVGKIPNGGIYAGQPEFYEGARHCAEQRWQWDGVDFEFLRPSERKNIDDNGKSCVLRVVAGGAALLVTGDLDTKGEESLVGKYGGNLYSQVLVLGHHGSNTSSSGVFLNAVSPEYAVASSGYANAYKHPTEAVQNRVRAHGIKLLRTDLSGALQFGLGRGGVKAQRLRVYKFYWQKKPFE</sequence>
<comment type="function">
    <text>Essential for natural transformation. Could be a transporter involved in DNA uptake.</text>
</comment>
<comment type="subcellular location">
    <subcellularLocation>
        <location evidence="2">Cell inner membrane</location>
        <topology evidence="2">Multi-pass membrane protein</topology>
    </subcellularLocation>
</comment>
<comment type="similarity">
    <text evidence="2">To B.subtilis ComEC, H.influenzae REC2, and E.coli YcaI.</text>
</comment>
<protein>
    <recommendedName>
        <fullName>Competence protein ComA</fullName>
    </recommendedName>
</protein>
<keyword id="KW-0997">Cell inner membrane</keyword>
<keyword id="KW-1003">Cell membrane</keyword>
<keyword id="KW-0178">Competence</keyword>
<keyword id="KW-0472">Membrane</keyword>
<keyword id="KW-0812">Transmembrane</keyword>
<keyword id="KW-1133">Transmembrane helix</keyword>
<keyword id="KW-0813">Transport</keyword>
<accession>P51973</accession>
<organism>
    <name type="scientific">Neisseria gonorrhoeae</name>
    <dbReference type="NCBI Taxonomy" id="485"/>
    <lineage>
        <taxon>Bacteria</taxon>
        <taxon>Pseudomonadati</taxon>
        <taxon>Pseudomonadota</taxon>
        <taxon>Betaproteobacteria</taxon>
        <taxon>Neisseriales</taxon>
        <taxon>Neisseriaceae</taxon>
        <taxon>Neisseria</taxon>
    </lineage>
</organism>
<name>COMA_NEIGO</name>
<proteinExistence type="predicted"/>
<dbReference type="EMBL" id="S75490">
    <property type="protein sequence ID" value="AAB32261.1"/>
    <property type="molecule type" value="Genomic_DNA"/>
</dbReference>
<dbReference type="EMBL" id="Z49895">
    <property type="status" value="NOT_ANNOTATED_CDS"/>
    <property type="molecule type" value="Genomic_DNA"/>
</dbReference>
<dbReference type="PIR" id="S39867">
    <property type="entry name" value="S39867"/>
</dbReference>
<dbReference type="SMR" id="P51973"/>
<dbReference type="TCDB" id="3.A.11.2.1">
    <property type="family name" value="the bacterial competence-related dna transformation transporter (dna-t) family"/>
</dbReference>
<dbReference type="GO" id="GO:0005886">
    <property type="term" value="C:plasma membrane"/>
    <property type="evidence" value="ECO:0007669"/>
    <property type="project" value="UniProtKB-SubCell"/>
</dbReference>
<dbReference type="GO" id="GO:0030420">
    <property type="term" value="P:establishment of competence for transformation"/>
    <property type="evidence" value="ECO:0007669"/>
    <property type="project" value="UniProtKB-KW"/>
</dbReference>
<dbReference type="CDD" id="cd07731">
    <property type="entry name" value="ComA-like_MBL-fold"/>
    <property type="match status" value="1"/>
</dbReference>
<dbReference type="Gene3D" id="3.60.15.10">
    <property type="entry name" value="Ribonuclease Z/Hydroxyacylglutathione hydrolase-like"/>
    <property type="match status" value="1"/>
</dbReference>
<dbReference type="InterPro" id="IPR035681">
    <property type="entry name" value="ComA-like_MBL"/>
</dbReference>
<dbReference type="InterPro" id="IPR004477">
    <property type="entry name" value="ComEC_N"/>
</dbReference>
<dbReference type="InterPro" id="IPR004797">
    <property type="entry name" value="Competence_ComEC/Rec2"/>
</dbReference>
<dbReference type="InterPro" id="IPR052159">
    <property type="entry name" value="Competence_DNA_uptake"/>
</dbReference>
<dbReference type="InterPro" id="IPR001279">
    <property type="entry name" value="Metallo-B-lactamas"/>
</dbReference>
<dbReference type="InterPro" id="IPR036866">
    <property type="entry name" value="RibonucZ/Hydroxyglut_hydro"/>
</dbReference>
<dbReference type="NCBIfam" id="TIGR00360">
    <property type="entry name" value="ComEC_N-term"/>
    <property type="match status" value="1"/>
</dbReference>
<dbReference type="NCBIfam" id="TIGR00361">
    <property type="entry name" value="ComEC_Rec2"/>
    <property type="match status" value="1"/>
</dbReference>
<dbReference type="PANTHER" id="PTHR30619">
    <property type="entry name" value="DNA INTERNALIZATION/COMPETENCE PROTEIN COMEC/REC2"/>
    <property type="match status" value="1"/>
</dbReference>
<dbReference type="PANTHER" id="PTHR30619:SF1">
    <property type="entry name" value="RECOMBINATION PROTEIN 2"/>
    <property type="match status" value="1"/>
</dbReference>
<dbReference type="Pfam" id="PF03772">
    <property type="entry name" value="Competence"/>
    <property type="match status" value="1"/>
</dbReference>
<dbReference type="Pfam" id="PF00753">
    <property type="entry name" value="Lactamase_B"/>
    <property type="match status" value="1"/>
</dbReference>
<dbReference type="SMART" id="SM00849">
    <property type="entry name" value="Lactamase_B"/>
    <property type="match status" value="1"/>
</dbReference>
<dbReference type="SUPFAM" id="SSF56281">
    <property type="entry name" value="Metallo-hydrolase/oxidoreductase"/>
    <property type="match status" value="1"/>
</dbReference>
<reference key="1">
    <citation type="journal article" date="1993" name="Mol. Microbiol.">
        <title>A novel determinant (comA) essential for natural transformation competence in Neisseria gonorrhoeae and the effect of a comA defect on pilin variation.</title>
        <authorList>
            <person name="Facius D."/>
            <person name="Meyer T.F."/>
        </authorList>
    </citation>
    <scope>NUCLEOTIDE SEQUENCE [GENOMIC DNA]</scope>
</reference>
<reference key="2">
    <citation type="journal article" date="1996" name="Mol. Microbiol.">
        <title>A novel peptidoglycan-linked lipoprotein (ComL) that functions in natural transformation competence of Neisseria gonorrhoeae.</title>
        <authorList>
            <person name="Fussenegger M."/>
            <person name="Facius D."/>
            <person name="Meier J."/>
            <person name="Meyer T.F."/>
        </authorList>
    </citation>
    <scope>NUCLEOTIDE SEQUENCE [GENOMIC DNA]</scope>
    <source>
        <strain>MS11A</strain>
    </source>
</reference>
<gene>
    <name type="primary">comA</name>
</gene>
<feature type="chain" id="PRO_0000090004" description="Competence protein ComA">
    <location>
        <begin position="1"/>
        <end position="691"/>
    </location>
</feature>
<feature type="transmembrane region" description="Helical" evidence="1">
    <location>
        <begin position="183"/>
        <end position="203"/>
    </location>
</feature>
<feature type="transmembrane region" description="Helical" evidence="1">
    <location>
        <begin position="220"/>
        <end position="240"/>
    </location>
</feature>
<feature type="transmembrane region" description="Helical" evidence="1">
    <location>
        <begin position="280"/>
        <end position="300"/>
    </location>
</feature>
<feature type="transmembrane region" description="Helical" evidence="1">
    <location>
        <begin position="322"/>
        <end position="342"/>
    </location>
</feature>
<feature type="transmembrane region" description="Helical" evidence="1">
    <location>
        <begin position="347"/>
        <end position="367"/>
    </location>
</feature>
<feature type="transmembrane region" description="Helical" evidence="1">
    <location>
        <begin position="396"/>
        <end position="416"/>
    </location>
</feature>